<keyword id="KW-0025">Alternative splicing</keyword>
<keyword id="KW-0106">Calcium</keyword>
<keyword id="KW-0217">Developmental protein</keyword>
<keyword id="KW-0221">Differentiation</keyword>
<keyword id="KW-1015">Disulfide bond</keyword>
<keyword id="KW-0245">EGF-like domain</keyword>
<keyword id="KW-0325">Glycoprotein</keyword>
<keyword id="KW-0378">Hydrolase</keyword>
<keyword id="KW-0479">Metal-binding</keyword>
<keyword id="KW-0482">Metalloprotease</keyword>
<keyword id="KW-0645">Protease</keyword>
<keyword id="KW-1185">Reference proteome</keyword>
<keyword id="KW-0677">Repeat</keyword>
<keyword id="KW-0964">Secreted</keyword>
<keyword id="KW-0732">Signal</keyword>
<keyword id="KW-0862">Zinc</keyword>
<keyword id="KW-0865">Zymogen</keyword>
<comment type="function">
    <text evidence="7">Protease which processes procollagen C-propeptides, such as chordin, pro-biglycan and pro-lysyl oxidase. Required for the embryonic development, especially heart development. Predominant protease, which in the development, influences dorsal-ventral patterning and skeletogenesis.</text>
</comment>
<comment type="cofactor">
    <cofactor evidence="5">
        <name>Zn(2+)</name>
        <dbReference type="ChEBI" id="CHEBI:29105"/>
    </cofactor>
    <text evidence="5">Binds 1 zinc ion per subunit.</text>
</comment>
<comment type="subcellular location">
    <subcellularLocation>
        <location evidence="10">Secreted</location>
    </subcellularLocation>
</comment>
<comment type="alternative products">
    <event type="alternative splicing"/>
    <isoform>
        <id>Q62381-1</id>
        <name>1</name>
        <sequence type="displayed"/>
    </isoform>
    <isoform>
        <id>Q62381-2</id>
        <name>2</name>
        <sequence type="described" ref="VSP_017199 VSP_017200"/>
    </isoform>
</comment>
<comment type="tissue specificity">
    <text evidence="8">Highly expressed in brain and kidney and weakly in lung, skeletal muscle. A perceptible level of expression is observed in heart and testis.</text>
</comment>
<comment type="developmental stage">
    <text evidence="8">Expressed at detectable level on 7 dpc, at increased level on 11 dpc, at maximal level on 15 dpc. Then, expression decreases from 17 dpc. Expressed in the developing neural tube.</text>
</comment>
<feature type="signal peptide" evidence="2">
    <location>
        <begin position="1"/>
        <end position="30"/>
    </location>
</feature>
<feature type="propeptide" id="PRO_0000046025" evidence="1">
    <location>
        <begin position="31"/>
        <end position="147"/>
    </location>
</feature>
<feature type="chain" id="PRO_0000046026" description="Tolloid-like protein 1">
    <location>
        <begin position="148"/>
        <end position="1013"/>
    </location>
</feature>
<feature type="domain" description="Peptidase M12A" evidence="5">
    <location>
        <begin position="148"/>
        <end position="347"/>
    </location>
</feature>
<feature type="domain" description="CUB 1" evidence="3">
    <location>
        <begin position="349"/>
        <end position="461"/>
    </location>
</feature>
<feature type="domain" description="CUB 2" evidence="3">
    <location>
        <begin position="462"/>
        <end position="574"/>
    </location>
</feature>
<feature type="domain" description="EGF-like 1; calcium-binding" evidence="4">
    <location>
        <begin position="574"/>
        <end position="615"/>
    </location>
</feature>
<feature type="domain" description="CUB 3" evidence="3">
    <location>
        <begin position="618"/>
        <end position="730"/>
    </location>
</feature>
<feature type="domain" description="EGF-like 2; calcium-binding" evidence="4">
    <location>
        <begin position="730"/>
        <end position="770"/>
    </location>
</feature>
<feature type="domain" description="CUB 4" evidence="3">
    <location>
        <begin position="774"/>
        <end position="886"/>
    </location>
</feature>
<feature type="domain" description="CUB 5" evidence="3">
    <location>
        <begin position="887"/>
        <end position="1003"/>
    </location>
</feature>
<feature type="region of interest" description="Disordered" evidence="6">
    <location>
        <begin position="124"/>
        <end position="150"/>
    </location>
</feature>
<feature type="active site" evidence="5">
    <location>
        <position position="241"/>
    </location>
</feature>
<feature type="binding site" evidence="5">
    <location>
        <position position="240"/>
    </location>
    <ligand>
        <name>Zn(2+)</name>
        <dbReference type="ChEBI" id="CHEBI:29105"/>
        <note>catalytic</note>
    </ligand>
</feature>
<feature type="binding site" evidence="5">
    <location>
        <position position="244"/>
    </location>
    <ligand>
        <name>Zn(2+)</name>
        <dbReference type="ChEBI" id="CHEBI:29105"/>
        <note>catalytic</note>
    </ligand>
</feature>
<feature type="binding site" evidence="5">
    <location>
        <position position="250"/>
    </location>
    <ligand>
        <name>Zn(2+)</name>
        <dbReference type="ChEBI" id="CHEBI:29105"/>
        <note>catalytic</note>
    </ligand>
</feature>
<feature type="glycosylation site" description="N-linked (GlcNAc...) asparagine" evidence="2">
    <location>
        <position position="169"/>
    </location>
</feature>
<feature type="glycosylation site" description="N-linked (GlcNAc...) asparagine" evidence="2">
    <location>
        <position position="359"/>
    </location>
</feature>
<feature type="glycosylation site" description="N-linked (GlcNAc...) asparagine" evidence="2">
    <location>
        <position position="390"/>
    </location>
</feature>
<feature type="glycosylation site" description="N-linked (GlcNAc...) asparagine" evidence="2">
    <location>
        <position position="626"/>
    </location>
</feature>
<feature type="disulfide bond" evidence="5">
    <location>
        <begin position="190"/>
        <end position="346"/>
    </location>
</feature>
<feature type="disulfide bond" evidence="5">
    <location>
        <begin position="210"/>
        <end position="232"/>
    </location>
</feature>
<feature type="disulfide bond" evidence="5">
    <location>
        <begin position="212"/>
        <end position="213"/>
    </location>
</feature>
<feature type="disulfide bond" evidence="1">
    <location>
        <begin position="349"/>
        <end position="375"/>
    </location>
</feature>
<feature type="disulfide bond" evidence="1">
    <location>
        <begin position="402"/>
        <end position="424"/>
    </location>
</feature>
<feature type="disulfide bond" evidence="1">
    <location>
        <begin position="462"/>
        <end position="488"/>
    </location>
</feature>
<feature type="disulfide bond" evidence="1">
    <location>
        <begin position="515"/>
        <end position="537"/>
    </location>
</feature>
<feature type="disulfide bond" evidence="1">
    <location>
        <begin position="578"/>
        <end position="590"/>
    </location>
</feature>
<feature type="disulfide bond" evidence="1">
    <location>
        <begin position="586"/>
        <end position="599"/>
    </location>
</feature>
<feature type="disulfide bond" evidence="1">
    <location>
        <begin position="601"/>
        <end position="614"/>
    </location>
</feature>
<feature type="disulfide bond" evidence="1">
    <location>
        <begin position="618"/>
        <end position="644"/>
    </location>
</feature>
<feature type="disulfide bond" evidence="1">
    <location>
        <begin position="671"/>
        <end position="693"/>
    </location>
</feature>
<feature type="disulfide bond" evidence="1">
    <location>
        <begin position="734"/>
        <end position="745"/>
    </location>
</feature>
<feature type="disulfide bond" evidence="1">
    <location>
        <begin position="741"/>
        <end position="754"/>
    </location>
</feature>
<feature type="disulfide bond" evidence="1">
    <location>
        <begin position="756"/>
        <end position="769"/>
    </location>
</feature>
<feature type="disulfide bond" evidence="1">
    <location>
        <begin position="774"/>
        <end position="800"/>
    </location>
</feature>
<feature type="disulfide bond" evidence="1">
    <location>
        <begin position="827"/>
        <end position="849"/>
    </location>
</feature>
<feature type="disulfide bond" evidence="1">
    <location>
        <begin position="887"/>
        <end position="917"/>
    </location>
</feature>
<feature type="disulfide bond" evidence="1">
    <location>
        <begin position="944"/>
        <end position="966"/>
    </location>
</feature>
<feature type="splice variant" id="VSP_017199" description="In isoform 2." evidence="9">
    <original>IVLN</original>
    <variation>VVDT</variation>
    <location>
        <begin position="387"/>
        <end position="390"/>
    </location>
</feature>
<feature type="splice variant" id="VSP_017200" description="In isoform 2." evidence="9">
    <location>
        <begin position="391"/>
        <end position="1013"/>
    </location>
</feature>
<feature type="sequence conflict" description="In Ref. 2; BAE23891." evidence="10" ref="2">
    <original>P</original>
    <variation>L</variation>
    <location>
        <position position="682"/>
    </location>
</feature>
<accession>Q62381</accession>
<accession>Q3UTT9</accession>
<accession>Q8BNP5</accession>
<evidence type="ECO:0000250" key="1"/>
<evidence type="ECO:0000255" key="2"/>
<evidence type="ECO:0000255" key="3">
    <source>
        <dbReference type="PROSITE-ProRule" id="PRU00059"/>
    </source>
</evidence>
<evidence type="ECO:0000255" key="4">
    <source>
        <dbReference type="PROSITE-ProRule" id="PRU00076"/>
    </source>
</evidence>
<evidence type="ECO:0000255" key="5">
    <source>
        <dbReference type="PROSITE-ProRule" id="PRU01211"/>
    </source>
</evidence>
<evidence type="ECO:0000256" key="6">
    <source>
        <dbReference type="SAM" id="MobiDB-lite"/>
    </source>
</evidence>
<evidence type="ECO:0000269" key="7">
    <source>
    </source>
</evidence>
<evidence type="ECO:0000269" key="8">
    <source>
    </source>
</evidence>
<evidence type="ECO:0000303" key="9">
    <source>
    </source>
</evidence>
<evidence type="ECO:0000305" key="10"/>
<organism>
    <name type="scientific">Mus musculus</name>
    <name type="common">Mouse</name>
    <dbReference type="NCBI Taxonomy" id="10090"/>
    <lineage>
        <taxon>Eukaryota</taxon>
        <taxon>Metazoa</taxon>
        <taxon>Chordata</taxon>
        <taxon>Craniata</taxon>
        <taxon>Vertebrata</taxon>
        <taxon>Euteleostomi</taxon>
        <taxon>Mammalia</taxon>
        <taxon>Eutheria</taxon>
        <taxon>Euarchontoglires</taxon>
        <taxon>Glires</taxon>
        <taxon>Rodentia</taxon>
        <taxon>Myomorpha</taxon>
        <taxon>Muroidea</taxon>
        <taxon>Muridae</taxon>
        <taxon>Murinae</taxon>
        <taxon>Mus</taxon>
        <taxon>Mus</taxon>
    </lineage>
</organism>
<protein>
    <recommendedName>
        <fullName>Tolloid-like protein 1</fullName>
        <shortName>mTll</shortName>
        <ecNumber>3.4.24.-</ecNumber>
    </recommendedName>
</protein>
<name>TLL1_MOUSE</name>
<proteinExistence type="evidence at protein level"/>
<reference key="1">
    <citation type="journal article" date="1996" name="Genomics">
        <title>Characterization of a novel gene product (mammalian tolloid-like) with high sequence similarity to mammalian tolloid/bone morphogenetic protein-1.</title>
        <authorList>
            <person name="Takahara K."/>
            <person name="Brevard R."/>
            <person name="Hoffman G.G."/>
            <person name="Suzuki N."/>
            <person name="Greenspan D.S."/>
        </authorList>
    </citation>
    <scope>NUCLEOTIDE SEQUENCE [MRNA] (ISOFORM 1)</scope>
    <scope>TISSUE SPECIFICITY</scope>
    <scope>DEVELOPMENTAL STAGE</scope>
</reference>
<reference key="2">
    <citation type="journal article" date="2005" name="Science">
        <title>The transcriptional landscape of the mammalian genome.</title>
        <authorList>
            <person name="Carninci P."/>
            <person name="Kasukawa T."/>
            <person name="Katayama S."/>
            <person name="Gough J."/>
            <person name="Frith M.C."/>
            <person name="Maeda N."/>
            <person name="Oyama R."/>
            <person name="Ravasi T."/>
            <person name="Lenhard B."/>
            <person name="Wells C."/>
            <person name="Kodzius R."/>
            <person name="Shimokawa K."/>
            <person name="Bajic V.B."/>
            <person name="Brenner S.E."/>
            <person name="Batalov S."/>
            <person name="Forrest A.R."/>
            <person name="Zavolan M."/>
            <person name="Davis M.J."/>
            <person name="Wilming L.G."/>
            <person name="Aidinis V."/>
            <person name="Allen J.E."/>
            <person name="Ambesi-Impiombato A."/>
            <person name="Apweiler R."/>
            <person name="Aturaliya R.N."/>
            <person name="Bailey T.L."/>
            <person name="Bansal M."/>
            <person name="Baxter L."/>
            <person name="Beisel K.W."/>
            <person name="Bersano T."/>
            <person name="Bono H."/>
            <person name="Chalk A.M."/>
            <person name="Chiu K.P."/>
            <person name="Choudhary V."/>
            <person name="Christoffels A."/>
            <person name="Clutterbuck D.R."/>
            <person name="Crowe M.L."/>
            <person name="Dalla E."/>
            <person name="Dalrymple B.P."/>
            <person name="de Bono B."/>
            <person name="Della Gatta G."/>
            <person name="di Bernardo D."/>
            <person name="Down T."/>
            <person name="Engstrom P."/>
            <person name="Fagiolini M."/>
            <person name="Faulkner G."/>
            <person name="Fletcher C.F."/>
            <person name="Fukushima T."/>
            <person name="Furuno M."/>
            <person name="Futaki S."/>
            <person name="Gariboldi M."/>
            <person name="Georgii-Hemming P."/>
            <person name="Gingeras T.R."/>
            <person name="Gojobori T."/>
            <person name="Green R.E."/>
            <person name="Gustincich S."/>
            <person name="Harbers M."/>
            <person name="Hayashi Y."/>
            <person name="Hensch T.K."/>
            <person name="Hirokawa N."/>
            <person name="Hill D."/>
            <person name="Huminiecki L."/>
            <person name="Iacono M."/>
            <person name="Ikeo K."/>
            <person name="Iwama A."/>
            <person name="Ishikawa T."/>
            <person name="Jakt M."/>
            <person name="Kanapin A."/>
            <person name="Katoh M."/>
            <person name="Kawasawa Y."/>
            <person name="Kelso J."/>
            <person name="Kitamura H."/>
            <person name="Kitano H."/>
            <person name="Kollias G."/>
            <person name="Krishnan S.P."/>
            <person name="Kruger A."/>
            <person name="Kummerfeld S.K."/>
            <person name="Kurochkin I.V."/>
            <person name="Lareau L.F."/>
            <person name="Lazarevic D."/>
            <person name="Lipovich L."/>
            <person name="Liu J."/>
            <person name="Liuni S."/>
            <person name="McWilliam S."/>
            <person name="Madan Babu M."/>
            <person name="Madera M."/>
            <person name="Marchionni L."/>
            <person name="Matsuda H."/>
            <person name="Matsuzawa S."/>
            <person name="Miki H."/>
            <person name="Mignone F."/>
            <person name="Miyake S."/>
            <person name="Morris K."/>
            <person name="Mottagui-Tabar S."/>
            <person name="Mulder N."/>
            <person name="Nakano N."/>
            <person name="Nakauchi H."/>
            <person name="Ng P."/>
            <person name="Nilsson R."/>
            <person name="Nishiguchi S."/>
            <person name="Nishikawa S."/>
            <person name="Nori F."/>
            <person name="Ohara O."/>
            <person name="Okazaki Y."/>
            <person name="Orlando V."/>
            <person name="Pang K.C."/>
            <person name="Pavan W.J."/>
            <person name="Pavesi G."/>
            <person name="Pesole G."/>
            <person name="Petrovsky N."/>
            <person name="Piazza S."/>
            <person name="Reed J."/>
            <person name="Reid J.F."/>
            <person name="Ring B.Z."/>
            <person name="Ringwald M."/>
            <person name="Rost B."/>
            <person name="Ruan Y."/>
            <person name="Salzberg S.L."/>
            <person name="Sandelin A."/>
            <person name="Schneider C."/>
            <person name="Schoenbach C."/>
            <person name="Sekiguchi K."/>
            <person name="Semple C.A."/>
            <person name="Seno S."/>
            <person name="Sessa L."/>
            <person name="Sheng Y."/>
            <person name="Shibata Y."/>
            <person name="Shimada H."/>
            <person name="Shimada K."/>
            <person name="Silva D."/>
            <person name="Sinclair B."/>
            <person name="Sperling S."/>
            <person name="Stupka E."/>
            <person name="Sugiura K."/>
            <person name="Sultana R."/>
            <person name="Takenaka Y."/>
            <person name="Taki K."/>
            <person name="Tammoja K."/>
            <person name="Tan S.L."/>
            <person name="Tang S."/>
            <person name="Taylor M.S."/>
            <person name="Tegner J."/>
            <person name="Teichmann S.A."/>
            <person name="Ueda H.R."/>
            <person name="van Nimwegen E."/>
            <person name="Verardo R."/>
            <person name="Wei C.L."/>
            <person name="Yagi K."/>
            <person name="Yamanishi H."/>
            <person name="Zabarovsky E."/>
            <person name="Zhu S."/>
            <person name="Zimmer A."/>
            <person name="Hide W."/>
            <person name="Bult C."/>
            <person name="Grimmond S.M."/>
            <person name="Teasdale R.D."/>
            <person name="Liu E.T."/>
            <person name="Brusic V."/>
            <person name="Quackenbush J."/>
            <person name="Wahlestedt C."/>
            <person name="Mattick J.S."/>
            <person name="Hume D.A."/>
            <person name="Kai C."/>
            <person name="Sasaki D."/>
            <person name="Tomaru Y."/>
            <person name="Fukuda S."/>
            <person name="Kanamori-Katayama M."/>
            <person name="Suzuki M."/>
            <person name="Aoki J."/>
            <person name="Arakawa T."/>
            <person name="Iida J."/>
            <person name="Imamura K."/>
            <person name="Itoh M."/>
            <person name="Kato T."/>
            <person name="Kawaji H."/>
            <person name="Kawagashira N."/>
            <person name="Kawashima T."/>
            <person name="Kojima M."/>
            <person name="Kondo S."/>
            <person name="Konno H."/>
            <person name="Nakano K."/>
            <person name="Ninomiya N."/>
            <person name="Nishio T."/>
            <person name="Okada M."/>
            <person name="Plessy C."/>
            <person name="Shibata K."/>
            <person name="Shiraki T."/>
            <person name="Suzuki S."/>
            <person name="Tagami M."/>
            <person name="Waki K."/>
            <person name="Watahiki A."/>
            <person name="Okamura-Oho Y."/>
            <person name="Suzuki H."/>
            <person name="Kawai J."/>
            <person name="Hayashizaki Y."/>
        </authorList>
    </citation>
    <scope>NUCLEOTIDE SEQUENCE [LARGE SCALE MRNA] (ISOFORM 2)</scope>
    <scope>NUCLEOTIDE SEQUENCE [LARGE SCALE MRNA] OF 535-1013 (ISOFORM 1)</scope>
    <source>
        <strain>C57BL/6J</strain>
        <tissue>Adipose tissue</tissue>
        <tissue>Cerebellum</tissue>
    </source>
</reference>
<reference key="3">
    <citation type="journal article" date="1999" name="Dev. Biol.">
        <title>Mammalian BMP-1/Tolloid-related metalloproteinases, including novel family member mammalian Tolloid-like 2, have differential enzymatic activities and distributions of expression relevant to patterning and skeletogenesis.</title>
        <authorList>
            <person name="Scott I.C."/>
            <person name="Blitz I.L."/>
            <person name="Pappano W.N."/>
            <person name="Imamura Y."/>
            <person name="Clark T.G."/>
            <person name="Steiglitz B.M."/>
            <person name="Thomas C.L."/>
            <person name="Maas S.A."/>
            <person name="Takahara K."/>
            <person name="Cho K.W."/>
            <person name="Greenspan D.S."/>
        </authorList>
    </citation>
    <scope>CHARACTERIZATION OF ACTION ON CHORDIN</scope>
</reference>
<reference key="4">
    <citation type="journal article" date="1999" name="Development">
        <title>The mammalian Tolloid-like 1 gene, Tll1, is necessary for normal septation and positioning of the heart.</title>
        <authorList>
            <person name="Clark T.G."/>
            <person name="Conway S.J."/>
            <person name="Scott I.C."/>
            <person name="Labosky P.A."/>
            <person name="Winnier G."/>
            <person name="Bundy J."/>
            <person name="Hogan B.L."/>
            <person name="Greenspan D.S."/>
        </authorList>
    </citation>
    <scope>FUNCTION</scope>
</reference>
<reference key="5">
    <citation type="journal article" date="2000" name="J. Biol. Chem.">
        <title>Bone morphogenetic protein-1 processes probiglycan.</title>
        <authorList>
            <person name="Scott I.C."/>
            <person name="Imamura Y."/>
            <person name="Pappano W.N."/>
            <person name="Troedel J.M."/>
            <person name="Recklies A.D."/>
            <person name="Roughley P.J."/>
            <person name="Greenspan D.S."/>
        </authorList>
    </citation>
    <scope>CHARACTERIZATION OF ACTION ON PRO-BIGLYCAN</scope>
</reference>
<reference key="6">
    <citation type="journal article" date="2001" name="J. Biol. Chem.">
        <title>Multiple bone morphogenetic protein 1-related mammalian metalloproteinases process pro-lysyl oxidase at the correct physiological site and control lysyl oxidase activation in mouse embryo fibroblast cultures.</title>
        <authorList>
            <person name="Uzel M.I."/>
            <person name="Scott I.C."/>
            <person name="Babakhanlou-Chase H."/>
            <person name="Palamakumbura A.H."/>
            <person name="Pappano W.N."/>
            <person name="Hong H.-H."/>
            <person name="Greenspan D.S."/>
            <person name="Trackman P.C."/>
        </authorList>
    </citation>
    <scope>CHARACTERIZATION OF ACTION ON PRO-LYSYL OXIDASE</scope>
</reference>
<gene>
    <name type="primary">Tll1</name>
    <name type="synonym">Tll</name>
</gene>
<sequence>MGLQALSPRMLLWLVVSGIVFSRVLWVCAGLDYDYTFDGNEEDKTEPIDYKDPCKAAVFWGDIALDDEDLNIFQIDRTIDLTQSPFGKLGHITGGFGDHGMPKKRGALYQLIERIRRIGSGLEQNNTMKGKAPPKLSEQSEKNRVPRAATSRTERIWPGGVIPYVIGGNFTGSQRAMFKQAMRHWEKHTCVTFTERSDEESYIVFTYRPCGCCSYVGRRGNGPQAISIGKNCDKFGIVVHELGHVIGFWHEHTRPDRDNHVTIIRENIQPGQEYNFLKMEPGEVNSLGERYDFDSIMHYARNTFSRGMFLDTILPSRDDNGIRPAIGQRTRLSKGDIAQARKLYRCPACGETLQESSGNLSSPGFPNGYPSYTHCIWRVSVTPGEKIVLNFTTMDLYKSSLCWYDYIEVRDGYWRKSPLLGRFCGDKVAGVLTSTDSRMWIEFRSSSNWVGKGFAAVYEAICGGEIRKNEGQIQSPNYPDDYRPMKECVWKIMVSEGYHVGLTFQAFEIERHDSCAYDHLEVRDGASENSPLIGRFCGYDKPEDIRSTSNTLWMKFVSDGTVNKAGFAANFFKEEDECAKPDRGGCEQRCLNTLGSYQCACEPGYELGPDRRSCEAACGGLLTKLNGTITTPGWPKEYPPNKNCVWQVIAPSQYRISVKFEFFELEGNEVCKYDYVEIWSGPSSESKLHGKFCGADIPEVMTSHFNNMRIEFKSDNTVSKKGFKAHFFSDKDECSKDNGGCQHECVNTMGSYTCQCRNGFVLHENKHDCKEAECEQKIHSPSGLITSPNWPDKYPSRKECTWVISAIPGHRITLAFNEFEVEQHQECAYDHLEIFDGETEKSPILGRLCGSKIPDPLMATGNEMFIRFISDASVQRKGFQATHSTECGGRLKAESKPRDLYSHAQFGDNNYPGQLDCEWLLVSERGSRLELSFQTFEVEEEADCGYDYVEVFDGLSSKAVGLGRFCGSGPPEEIYSIGDVALIHFHTDDTINKKGFYIRYKSIRYPETMHAKN</sequence>
<dbReference type="EC" id="3.4.24.-"/>
<dbReference type="EMBL" id="U34042">
    <property type="protein sequence ID" value="AAC52654.1"/>
    <property type="molecule type" value="mRNA"/>
</dbReference>
<dbReference type="EMBL" id="AK080919">
    <property type="protein sequence ID" value="BAC38078.1"/>
    <property type="molecule type" value="mRNA"/>
</dbReference>
<dbReference type="EMBL" id="AK139103">
    <property type="protein sequence ID" value="BAE23891.1"/>
    <property type="molecule type" value="mRNA"/>
</dbReference>
<dbReference type="CCDS" id="CCDS40352.1">
    <molecule id="Q62381-1"/>
</dbReference>
<dbReference type="SMR" id="Q62381"/>
<dbReference type="BioGRID" id="204220">
    <property type="interactions" value="3"/>
</dbReference>
<dbReference type="FunCoup" id="Q62381">
    <property type="interactions" value="313"/>
</dbReference>
<dbReference type="IntAct" id="Q62381">
    <property type="interactions" value="3"/>
</dbReference>
<dbReference type="STRING" id="10090.ENSMUSP00000070560"/>
<dbReference type="MEROPS" id="M12.016"/>
<dbReference type="GlyCosmos" id="Q62381">
    <property type="glycosylation" value="4 sites, No reported glycans"/>
</dbReference>
<dbReference type="GlyGen" id="Q62381">
    <property type="glycosylation" value="10 sites, 2 N-linked glycans (3 sites), 1 O-linked glycan (4 sites)"/>
</dbReference>
<dbReference type="iPTMnet" id="Q62381"/>
<dbReference type="PhosphoSitePlus" id="Q62381"/>
<dbReference type="PaxDb" id="10090-ENSMUSP00000070560"/>
<dbReference type="PeptideAtlas" id="Q62381"/>
<dbReference type="ProteomicsDB" id="259512">
    <molecule id="Q62381-1"/>
</dbReference>
<dbReference type="ProteomicsDB" id="259513">
    <molecule id="Q62381-2"/>
</dbReference>
<dbReference type="UCSC" id="uc009luu.1">
    <molecule id="Q62381-2"/>
    <property type="organism name" value="mouse"/>
</dbReference>
<dbReference type="AGR" id="MGI:106923"/>
<dbReference type="MGI" id="MGI:106923">
    <property type="gene designation" value="Tll1"/>
</dbReference>
<dbReference type="eggNOG" id="KOG3714">
    <property type="taxonomic scope" value="Eukaryota"/>
</dbReference>
<dbReference type="InParanoid" id="Q62381"/>
<dbReference type="PhylomeDB" id="Q62381"/>
<dbReference type="Reactome" id="R-MMU-1650814">
    <property type="pathway name" value="Collagen biosynthesis and modifying enzymes"/>
</dbReference>
<dbReference type="Reactome" id="R-MMU-2214320">
    <property type="pathway name" value="Anchoring fibril formation"/>
</dbReference>
<dbReference type="Reactome" id="R-MMU-2243919">
    <property type="pathway name" value="Crosslinking of collagen fibrils"/>
</dbReference>
<dbReference type="BioGRID-ORCS" id="21892">
    <property type="hits" value="2 hits in 78 CRISPR screens"/>
</dbReference>
<dbReference type="ChiTaRS" id="Tll1">
    <property type="organism name" value="mouse"/>
</dbReference>
<dbReference type="PRO" id="PR:Q62381"/>
<dbReference type="Proteomes" id="UP000000589">
    <property type="component" value="Unplaced"/>
</dbReference>
<dbReference type="RNAct" id="Q62381">
    <property type="molecule type" value="protein"/>
</dbReference>
<dbReference type="GO" id="GO:0005576">
    <property type="term" value="C:extracellular region"/>
    <property type="evidence" value="ECO:0007669"/>
    <property type="project" value="UniProtKB-SubCell"/>
</dbReference>
<dbReference type="GO" id="GO:0005509">
    <property type="term" value="F:calcium ion binding"/>
    <property type="evidence" value="ECO:0007669"/>
    <property type="project" value="InterPro"/>
</dbReference>
<dbReference type="GO" id="GO:0005518">
    <property type="term" value="F:collagen binding"/>
    <property type="evidence" value="ECO:0000314"/>
    <property type="project" value="MGI"/>
</dbReference>
<dbReference type="GO" id="GO:0004222">
    <property type="term" value="F:metalloendopeptidase activity"/>
    <property type="evidence" value="ECO:0007669"/>
    <property type="project" value="InterPro"/>
</dbReference>
<dbReference type="GO" id="GO:0008270">
    <property type="term" value="F:zinc ion binding"/>
    <property type="evidence" value="ECO:0007669"/>
    <property type="project" value="InterPro"/>
</dbReference>
<dbReference type="GO" id="GO:0030154">
    <property type="term" value="P:cell differentiation"/>
    <property type="evidence" value="ECO:0007669"/>
    <property type="project" value="UniProtKB-KW"/>
</dbReference>
<dbReference type="GO" id="GO:0006508">
    <property type="term" value="P:proteolysis"/>
    <property type="evidence" value="ECO:0007669"/>
    <property type="project" value="UniProtKB-KW"/>
</dbReference>
<dbReference type="CDD" id="cd00041">
    <property type="entry name" value="CUB"/>
    <property type="match status" value="5"/>
</dbReference>
<dbReference type="CDD" id="cd00054">
    <property type="entry name" value="EGF_CA"/>
    <property type="match status" value="1"/>
</dbReference>
<dbReference type="CDD" id="cd04281">
    <property type="entry name" value="ZnMc_BMP1_TLD"/>
    <property type="match status" value="1"/>
</dbReference>
<dbReference type="FunFam" id="2.60.120.290:FF:000013">
    <property type="entry name" value="Membrane frizzled-related protein"/>
    <property type="match status" value="1"/>
</dbReference>
<dbReference type="FunFam" id="2.10.25.10:FF:000022">
    <property type="entry name" value="Metalloendopeptidase"/>
    <property type="match status" value="2"/>
</dbReference>
<dbReference type="FunFam" id="2.60.120.290:FF:000004">
    <property type="entry name" value="Metalloendopeptidase"/>
    <property type="match status" value="1"/>
</dbReference>
<dbReference type="FunFam" id="2.60.120.290:FF:000009">
    <property type="entry name" value="Metalloendopeptidase"/>
    <property type="match status" value="1"/>
</dbReference>
<dbReference type="FunFam" id="2.60.120.290:FF:000011">
    <property type="entry name" value="Metalloendopeptidase"/>
    <property type="match status" value="1"/>
</dbReference>
<dbReference type="FunFam" id="2.60.120.290:FF:000014">
    <property type="entry name" value="Metalloendopeptidase"/>
    <property type="match status" value="1"/>
</dbReference>
<dbReference type="FunFam" id="3.40.390.10:FF:000004">
    <property type="entry name" value="Metalloendopeptidase"/>
    <property type="match status" value="1"/>
</dbReference>
<dbReference type="Gene3D" id="3.40.390.10">
    <property type="entry name" value="Collagenase (Catalytic Domain)"/>
    <property type="match status" value="1"/>
</dbReference>
<dbReference type="Gene3D" id="2.10.25.10">
    <property type="entry name" value="Laminin"/>
    <property type="match status" value="2"/>
</dbReference>
<dbReference type="Gene3D" id="2.60.120.290">
    <property type="entry name" value="Spermadhesin, CUB domain"/>
    <property type="match status" value="5"/>
</dbReference>
<dbReference type="InterPro" id="IPR015446">
    <property type="entry name" value="BMP_1/tolloid-like"/>
</dbReference>
<dbReference type="InterPro" id="IPR000859">
    <property type="entry name" value="CUB_dom"/>
</dbReference>
<dbReference type="InterPro" id="IPR001881">
    <property type="entry name" value="EGF-like_Ca-bd_dom"/>
</dbReference>
<dbReference type="InterPro" id="IPR000742">
    <property type="entry name" value="EGF-like_dom"/>
</dbReference>
<dbReference type="InterPro" id="IPR000152">
    <property type="entry name" value="EGF-type_Asp/Asn_hydroxyl_site"/>
</dbReference>
<dbReference type="InterPro" id="IPR018097">
    <property type="entry name" value="EGF_Ca-bd_CS"/>
</dbReference>
<dbReference type="InterPro" id="IPR024079">
    <property type="entry name" value="MetalloPept_cat_dom_sf"/>
</dbReference>
<dbReference type="InterPro" id="IPR001506">
    <property type="entry name" value="Peptidase_M12A"/>
</dbReference>
<dbReference type="InterPro" id="IPR006026">
    <property type="entry name" value="Peptidase_Metallo"/>
</dbReference>
<dbReference type="InterPro" id="IPR035914">
    <property type="entry name" value="Sperma_CUB_dom_sf"/>
</dbReference>
<dbReference type="InterPro" id="IPR034036">
    <property type="entry name" value="ZnMP_TLD/BMP1"/>
</dbReference>
<dbReference type="PANTHER" id="PTHR24251:SF37">
    <property type="entry name" value="CUB DOMAIN-CONTAINING PROTEIN"/>
    <property type="match status" value="1"/>
</dbReference>
<dbReference type="PANTHER" id="PTHR24251">
    <property type="entry name" value="OVOCHYMASE-RELATED"/>
    <property type="match status" value="1"/>
</dbReference>
<dbReference type="Pfam" id="PF01400">
    <property type="entry name" value="Astacin"/>
    <property type="match status" value="1"/>
</dbReference>
<dbReference type="Pfam" id="PF00431">
    <property type="entry name" value="CUB"/>
    <property type="match status" value="5"/>
</dbReference>
<dbReference type="Pfam" id="PF14670">
    <property type="entry name" value="FXa_inhibition"/>
    <property type="match status" value="2"/>
</dbReference>
<dbReference type="PIRSF" id="PIRSF001199">
    <property type="entry name" value="BMP_1/tolloid-like"/>
    <property type="match status" value="1"/>
</dbReference>
<dbReference type="PRINTS" id="PR00480">
    <property type="entry name" value="ASTACIN"/>
</dbReference>
<dbReference type="SMART" id="SM00042">
    <property type="entry name" value="CUB"/>
    <property type="match status" value="5"/>
</dbReference>
<dbReference type="SMART" id="SM00181">
    <property type="entry name" value="EGF"/>
    <property type="match status" value="2"/>
</dbReference>
<dbReference type="SMART" id="SM00179">
    <property type="entry name" value="EGF_CA"/>
    <property type="match status" value="2"/>
</dbReference>
<dbReference type="SMART" id="SM00235">
    <property type="entry name" value="ZnMc"/>
    <property type="match status" value="1"/>
</dbReference>
<dbReference type="SUPFAM" id="SSF57196">
    <property type="entry name" value="EGF/Laminin"/>
    <property type="match status" value="2"/>
</dbReference>
<dbReference type="SUPFAM" id="SSF55486">
    <property type="entry name" value="Metalloproteases ('zincins'), catalytic domain"/>
    <property type="match status" value="1"/>
</dbReference>
<dbReference type="SUPFAM" id="SSF49854">
    <property type="entry name" value="Spermadhesin, CUB domain"/>
    <property type="match status" value="5"/>
</dbReference>
<dbReference type="PROSITE" id="PS51864">
    <property type="entry name" value="ASTACIN"/>
    <property type="match status" value="1"/>
</dbReference>
<dbReference type="PROSITE" id="PS01180">
    <property type="entry name" value="CUB"/>
    <property type="match status" value="5"/>
</dbReference>
<dbReference type="PROSITE" id="PS01186">
    <property type="entry name" value="EGF_2"/>
    <property type="match status" value="2"/>
</dbReference>
<dbReference type="PROSITE" id="PS50026">
    <property type="entry name" value="EGF_3"/>
    <property type="match status" value="2"/>
</dbReference>
<dbReference type="PROSITE" id="PS01187">
    <property type="entry name" value="EGF_CA"/>
    <property type="match status" value="2"/>
</dbReference>
<dbReference type="PROSITE" id="PS00142">
    <property type="entry name" value="ZINC_PROTEASE"/>
    <property type="match status" value="1"/>
</dbReference>